<keyword id="KW-0067">ATP-binding</keyword>
<keyword id="KW-0143">Chaperone</keyword>
<keyword id="KW-0963">Cytoplasm</keyword>
<keyword id="KW-0547">Nucleotide-binding</keyword>
<keyword id="KW-0346">Stress response</keyword>
<evidence type="ECO:0000255" key="1">
    <source>
        <dbReference type="HAMAP-Rule" id="MF_00249"/>
    </source>
</evidence>
<comment type="function">
    <text evidence="1">ATPase subunit of a proteasome-like degradation complex; this subunit has chaperone activity. The binding of ATP and its subsequent hydrolysis by HslU are essential for unfolding of protein substrates subsequently hydrolyzed by HslV. HslU recognizes the N-terminal part of its protein substrates and unfolds these before they are guided to HslV for hydrolysis.</text>
</comment>
<comment type="subunit">
    <text evidence="1">A double ring-shaped homohexamer of HslV is capped on each side by a ring-shaped HslU homohexamer. The assembly of the HslU/HslV complex is dependent on binding of ATP.</text>
</comment>
<comment type="subcellular location">
    <subcellularLocation>
        <location evidence="1">Cytoplasm</location>
    </subcellularLocation>
</comment>
<comment type="similarity">
    <text evidence="1">Belongs to the ClpX chaperone family. HslU subfamily.</text>
</comment>
<protein>
    <recommendedName>
        <fullName evidence="1">ATP-dependent protease ATPase subunit HslU</fullName>
    </recommendedName>
    <alternativeName>
        <fullName evidence="1">Unfoldase HslU</fullName>
    </alternativeName>
</protein>
<feature type="chain" id="PRO_1000100954" description="ATP-dependent protease ATPase subunit HslU">
    <location>
        <begin position="1"/>
        <end position="444"/>
    </location>
</feature>
<feature type="binding site" evidence="1">
    <location>
        <position position="18"/>
    </location>
    <ligand>
        <name>ATP</name>
        <dbReference type="ChEBI" id="CHEBI:30616"/>
    </ligand>
</feature>
<feature type="binding site" evidence="1">
    <location>
        <begin position="60"/>
        <end position="65"/>
    </location>
    <ligand>
        <name>ATP</name>
        <dbReference type="ChEBI" id="CHEBI:30616"/>
    </ligand>
</feature>
<feature type="binding site" evidence="1">
    <location>
        <position position="256"/>
    </location>
    <ligand>
        <name>ATP</name>
        <dbReference type="ChEBI" id="CHEBI:30616"/>
    </ligand>
</feature>
<feature type="binding site" evidence="1">
    <location>
        <position position="322"/>
    </location>
    <ligand>
        <name>ATP</name>
        <dbReference type="ChEBI" id="CHEBI:30616"/>
    </ligand>
</feature>
<feature type="binding site" evidence="1">
    <location>
        <position position="394"/>
    </location>
    <ligand>
        <name>ATP</name>
        <dbReference type="ChEBI" id="CHEBI:30616"/>
    </ligand>
</feature>
<dbReference type="EMBL" id="CP000964">
    <property type="protein sequence ID" value="ACI08098.1"/>
    <property type="molecule type" value="Genomic_DNA"/>
</dbReference>
<dbReference type="SMR" id="B5XZ37"/>
<dbReference type="KEGG" id="kpe:KPK_5453"/>
<dbReference type="HOGENOM" id="CLU_033123_0_0_6"/>
<dbReference type="Proteomes" id="UP000001734">
    <property type="component" value="Chromosome"/>
</dbReference>
<dbReference type="GO" id="GO:0009376">
    <property type="term" value="C:HslUV protease complex"/>
    <property type="evidence" value="ECO:0007669"/>
    <property type="project" value="UniProtKB-UniRule"/>
</dbReference>
<dbReference type="GO" id="GO:0005524">
    <property type="term" value="F:ATP binding"/>
    <property type="evidence" value="ECO:0007669"/>
    <property type="project" value="UniProtKB-UniRule"/>
</dbReference>
<dbReference type="GO" id="GO:0016887">
    <property type="term" value="F:ATP hydrolysis activity"/>
    <property type="evidence" value="ECO:0007669"/>
    <property type="project" value="InterPro"/>
</dbReference>
<dbReference type="GO" id="GO:0008233">
    <property type="term" value="F:peptidase activity"/>
    <property type="evidence" value="ECO:0007669"/>
    <property type="project" value="InterPro"/>
</dbReference>
<dbReference type="GO" id="GO:0036402">
    <property type="term" value="F:proteasome-activating activity"/>
    <property type="evidence" value="ECO:0007669"/>
    <property type="project" value="UniProtKB-UniRule"/>
</dbReference>
<dbReference type="GO" id="GO:0043335">
    <property type="term" value="P:protein unfolding"/>
    <property type="evidence" value="ECO:0007669"/>
    <property type="project" value="UniProtKB-UniRule"/>
</dbReference>
<dbReference type="GO" id="GO:0051603">
    <property type="term" value="P:proteolysis involved in protein catabolic process"/>
    <property type="evidence" value="ECO:0007669"/>
    <property type="project" value="TreeGrafter"/>
</dbReference>
<dbReference type="CDD" id="cd19498">
    <property type="entry name" value="RecA-like_HslU"/>
    <property type="match status" value="1"/>
</dbReference>
<dbReference type="FunFam" id="1.10.8.10:FF:000028">
    <property type="entry name" value="ATP-dependent protease ATPase subunit HslU"/>
    <property type="match status" value="2"/>
</dbReference>
<dbReference type="FunFam" id="1.10.8.60:FF:000027">
    <property type="entry name" value="ATP-dependent protease ATPase subunit HslU"/>
    <property type="match status" value="1"/>
</dbReference>
<dbReference type="FunFam" id="3.40.50.300:FF:000213">
    <property type="entry name" value="ATP-dependent protease ATPase subunit HslU"/>
    <property type="match status" value="1"/>
</dbReference>
<dbReference type="FunFam" id="3.40.50.300:FF:000220">
    <property type="entry name" value="ATP-dependent protease ATPase subunit HslU"/>
    <property type="match status" value="1"/>
</dbReference>
<dbReference type="Gene3D" id="1.10.8.60">
    <property type="match status" value="1"/>
</dbReference>
<dbReference type="Gene3D" id="1.10.8.10">
    <property type="entry name" value="DNA helicase RuvA subunit, C-terminal domain"/>
    <property type="match status" value="1"/>
</dbReference>
<dbReference type="Gene3D" id="3.40.50.300">
    <property type="entry name" value="P-loop containing nucleotide triphosphate hydrolases"/>
    <property type="match status" value="2"/>
</dbReference>
<dbReference type="HAMAP" id="MF_00249">
    <property type="entry name" value="HslU"/>
    <property type="match status" value="1"/>
</dbReference>
<dbReference type="InterPro" id="IPR003593">
    <property type="entry name" value="AAA+_ATPase"/>
</dbReference>
<dbReference type="InterPro" id="IPR050052">
    <property type="entry name" value="ATP-dep_Clp_protease_ClpX"/>
</dbReference>
<dbReference type="InterPro" id="IPR003959">
    <property type="entry name" value="ATPase_AAA_core"/>
</dbReference>
<dbReference type="InterPro" id="IPR019489">
    <property type="entry name" value="Clp_ATPase_C"/>
</dbReference>
<dbReference type="InterPro" id="IPR004491">
    <property type="entry name" value="HslU"/>
</dbReference>
<dbReference type="InterPro" id="IPR027417">
    <property type="entry name" value="P-loop_NTPase"/>
</dbReference>
<dbReference type="NCBIfam" id="TIGR00390">
    <property type="entry name" value="hslU"/>
    <property type="match status" value="1"/>
</dbReference>
<dbReference type="NCBIfam" id="NF003544">
    <property type="entry name" value="PRK05201.1"/>
    <property type="match status" value="1"/>
</dbReference>
<dbReference type="PANTHER" id="PTHR48102">
    <property type="entry name" value="ATP-DEPENDENT CLP PROTEASE ATP-BINDING SUBUNIT CLPX-LIKE, MITOCHONDRIAL-RELATED"/>
    <property type="match status" value="1"/>
</dbReference>
<dbReference type="PANTHER" id="PTHR48102:SF3">
    <property type="entry name" value="ATP-DEPENDENT PROTEASE ATPASE SUBUNIT HSLU"/>
    <property type="match status" value="1"/>
</dbReference>
<dbReference type="Pfam" id="PF00004">
    <property type="entry name" value="AAA"/>
    <property type="match status" value="1"/>
</dbReference>
<dbReference type="Pfam" id="PF07724">
    <property type="entry name" value="AAA_2"/>
    <property type="match status" value="1"/>
</dbReference>
<dbReference type="SMART" id="SM00382">
    <property type="entry name" value="AAA"/>
    <property type="match status" value="1"/>
</dbReference>
<dbReference type="SMART" id="SM01086">
    <property type="entry name" value="ClpB_D2-small"/>
    <property type="match status" value="1"/>
</dbReference>
<dbReference type="SUPFAM" id="SSF52540">
    <property type="entry name" value="P-loop containing nucleoside triphosphate hydrolases"/>
    <property type="match status" value="1"/>
</dbReference>
<reference key="1">
    <citation type="journal article" date="2008" name="PLoS Genet.">
        <title>Complete genome sequence of the N2-fixing broad host range endophyte Klebsiella pneumoniae 342 and virulence predictions verified in mice.</title>
        <authorList>
            <person name="Fouts D.E."/>
            <person name="Tyler H.L."/>
            <person name="DeBoy R.T."/>
            <person name="Daugherty S."/>
            <person name="Ren Q."/>
            <person name="Badger J.H."/>
            <person name="Durkin A.S."/>
            <person name="Huot H."/>
            <person name="Shrivastava S."/>
            <person name="Kothari S."/>
            <person name="Dodson R.J."/>
            <person name="Mohamoud Y."/>
            <person name="Khouri H."/>
            <person name="Roesch L.F.W."/>
            <person name="Krogfelt K.A."/>
            <person name="Struve C."/>
            <person name="Triplett E.W."/>
            <person name="Methe B.A."/>
        </authorList>
    </citation>
    <scope>NUCLEOTIDE SEQUENCE [LARGE SCALE GENOMIC DNA]</scope>
    <source>
        <strain>342</strain>
    </source>
</reference>
<name>HSLU_KLEP3</name>
<gene>
    <name evidence="1" type="primary">hslU</name>
    <name type="ordered locus">KPK_5453</name>
</gene>
<accession>B5XZ37</accession>
<sequence length="444" mass="49712">MSEMTPREIVSELDKHIIGQDAAKRSVAIALRNRWRRMQLNEELRHEVTPKNILMIGPTGVGKTEIARRLAKLANAPFIKVEATKFTEVGYVGKEVDSIIRDLTDAAIKMVRMQSIDKNRYRAEELAEERVLDVLIPPAKNNWGQAEQPQEPSAARQAFRKKLREGQLDDKEIEIDLAAAPMGVEIMSPPGMEEMTSQLQSMFQNLGGQKQKPRKLKIKDAMKLLIEEEAAKLVNPEELKQEAIDAVEQHGIVFIDEIDKICKRGGNSSGPDVSREGVQRDLLPLVEGCTVSTKHGMVKTDHILFIASGAFQVASPSDLIPELQGRLPIRVELKALTTHDFERILTEPNASITVQYKALMATEGVNIEFTEDGIKRIAQAAWQVNETTENIGARRLHTVLERLVEDISYDASEMNGQTVIIDAEYVSKHLDVLVADEDLSRFIL</sequence>
<proteinExistence type="inferred from homology"/>
<organism>
    <name type="scientific">Klebsiella pneumoniae (strain 342)</name>
    <dbReference type="NCBI Taxonomy" id="507522"/>
    <lineage>
        <taxon>Bacteria</taxon>
        <taxon>Pseudomonadati</taxon>
        <taxon>Pseudomonadota</taxon>
        <taxon>Gammaproteobacteria</taxon>
        <taxon>Enterobacterales</taxon>
        <taxon>Enterobacteriaceae</taxon>
        <taxon>Klebsiella/Raoultella group</taxon>
        <taxon>Klebsiella</taxon>
        <taxon>Klebsiella pneumoniae complex</taxon>
    </lineage>
</organism>